<feature type="chain" id="PRO_1000093670" description="Thiamine-phosphate synthase">
    <location>
        <begin position="1"/>
        <end position="214"/>
    </location>
</feature>
<feature type="binding site" evidence="1">
    <location>
        <begin position="39"/>
        <end position="43"/>
    </location>
    <ligand>
        <name>4-amino-2-methyl-5-(diphosphooxymethyl)pyrimidine</name>
        <dbReference type="ChEBI" id="CHEBI:57841"/>
    </ligand>
</feature>
<feature type="binding site" evidence="1">
    <location>
        <position position="71"/>
    </location>
    <ligand>
        <name>4-amino-2-methyl-5-(diphosphooxymethyl)pyrimidine</name>
        <dbReference type="ChEBI" id="CHEBI:57841"/>
    </ligand>
</feature>
<feature type="binding site" evidence="1">
    <location>
        <position position="72"/>
    </location>
    <ligand>
        <name>Mg(2+)</name>
        <dbReference type="ChEBI" id="CHEBI:18420"/>
    </ligand>
</feature>
<feature type="binding site" evidence="1">
    <location>
        <position position="91"/>
    </location>
    <ligand>
        <name>Mg(2+)</name>
        <dbReference type="ChEBI" id="CHEBI:18420"/>
    </ligand>
</feature>
<feature type="binding site" evidence="1">
    <location>
        <position position="110"/>
    </location>
    <ligand>
        <name>4-amino-2-methyl-5-(diphosphooxymethyl)pyrimidine</name>
        <dbReference type="ChEBI" id="CHEBI:57841"/>
    </ligand>
</feature>
<feature type="binding site" evidence="1">
    <location>
        <begin position="136"/>
        <end position="138"/>
    </location>
    <ligand>
        <name>2-[(2R,5Z)-2-carboxy-4-methylthiazol-5(2H)-ylidene]ethyl phosphate</name>
        <dbReference type="ChEBI" id="CHEBI:62899"/>
    </ligand>
</feature>
<feature type="binding site" evidence="1">
    <location>
        <position position="139"/>
    </location>
    <ligand>
        <name>4-amino-2-methyl-5-(diphosphooxymethyl)pyrimidine</name>
        <dbReference type="ChEBI" id="CHEBI:57841"/>
    </ligand>
</feature>
<feature type="binding site" evidence="1">
    <location>
        <position position="166"/>
    </location>
    <ligand>
        <name>2-[(2R,5Z)-2-carboxy-4-methylthiazol-5(2H)-ylidene]ethyl phosphate</name>
        <dbReference type="ChEBI" id="CHEBI:62899"/>
    </ligand>
</feature>
<feature type="binding site" evidence="1">
    <location>
        <begin position="186"/>
        <end position="187"/>
    </location>
    <ligand>
        <name>2-[(2R,5Z)-2-carboxy-4-methylthiazol-5(2H)-ylidene]ethyl phosphate</name>
        <dbReference type="ChEBI" id="CHEBI:62899"/>
    </ligand>
</feature>
<accession>B4U6B2</accession>
<comment type="function">
    <text evidence="1">Condenses 4-methyl-5-(beta-hydroxyethyl)thiazole monophosphate (THZ-P) and 2-methyl-4-amino-5-hydroxymethyl pyrimidine pyrophosphate (HMP-PP) to form thiamine monophosphate (TMP).</text>
</comment>
<comment type="catalytic activity">
    <reaction evidence="1">
        <text>2-[(2R,5Z)-2-carboxy-4-methylthiazol-5(2H)-ylidene]ethyl phosphate + 4-amino-2-methyl-5-(diphosphooxymethyl)pyrimidine + 2 H(+) = thiamine phosphate + CO2 + diphosphate</text>
        <dbReference type="Rhea" id="RHEA:47844"/>
        <dbReference type="ChEBI" id="CHEBI:15378"/>
        <dbReference type="ChEBI" id="CHEBI:16526"/>
        <dbReference type="ChEBI" id="CHEBI:33019"/>
        <dbReference type="ChEBI" id="CHEBI:37575"/>
        <dbReference type="ChEBI" id="CHEBI:57841"/>
        <dbReference type="ChEBI" id="CHEBI:62899"/>
        <dbReference type="EC" id="2.5.1.3"/>
    </reaction>
</comment>
<comment type="catalytic activity">
    <reaction evidence="1">
        <text>2-(2-carboxy-4-methylthiazol-5-yl)ethyl phosphate + 4-amino-2-methyl-5-(diphosphooxymethyl)pyrimidine + 2 H(+) = thiamine phosphate + CO2 + diphosphate</text>
        <dbReference type="Rhea" id="RHEA:47848"/>
        <dbReference type="ChEBI" id="CHEBI:15378"/>
        <dbReference type="ChEBI" id="CHEBI:16526"/>
        <dbReference type="ChEBI" id="CHEBI:33019"/>
        <dbReference type="ChEBI" id="CHEBI:37575"/>
        <dbReference type="ChEBI" id="CHEBI:57841"/>
        <dbReference type="ChEBI" id="CHEBI:62890"/>
        <dbReference type="EC" id="2.5.1.3"/>
    </reaction>
</comment>
<comment type="catalytic activity">
    <reaction evidence="1">
        <text>4-methyl-5-(2-phosphooxyethyl)-thiazole + 4-amino-2-methyl-5-(diphosphooxymethyl)pyrimidine + H(+) = thiamine phosphate + diphosphate</text>
        <dbReference type="Rhea" id="RHEA:22328"/>
        <dbReference type="ChEBI" id="CHEBI:15378"/>
        <dbReference type="ChEBI" id="CHEBI:33019"/>
        <dbReference type="ChEBI" id="CHEBI:37575"/>
        <dbReference type="ChEBI" id="CHEBI:57841"/>
        <dbReference type="ChEBI" id="CHEBI:58296"/>
        <dbReference type="EC" id="2.5.1.3"/>
    </reaction>
</comment>
<comment type="cofactor">
    <cofactor evidence="1">
        <name>Mg(2+)</name>
        <dbReference type="ChEBI" id="CHEBI:18420"/>
    </cofactor>
    <text evidence="1">Binds 1 Mg(2+) ion per subunit.</text>
</comment>
<comment type="pathway">
    <text evidence="1">Cofactor biosynthesis; thiamine diphosphate biosynthesis; thiamine phosphate from 4-amino-2-methyl-5-diphosphomethylpyrimidine and 4-methyl-5-(2-phosphoethyl)-thiazole: step 1/1.</text>
</comment>
<comment type="similarity">
    <text evidence="1">Belongs to the thiamine-phosphate synthase family.</text>
</comment>
<gene>
    <name evidence="1" type="primary">thiE</name>
    <name type="ordered locus">HY04AAS1_1566</name>
</gene>
<proteinExistence type="inferred from homology"/>
<organism>
    <name type="scientific">Hydrogenobaculum sp. (strain Y04AAS1)</name>
    <dbReference type="NCBI Taxonomy" id="380749"/>
    <lineage>
        <taxon>Bacteria</taxon>
        <taxon>Pseudomonadati</taxon>
        <taxon>Aquificota</taxon>
        <taxon>Aquificia</taxon>
        <taxon>Aquificales</taxon>
        <taxon>Aquificaceae</taxon>
        <taxon>Hydrogenobaculum</taxon>
    </lineage>
</organism>
<keyword id="KW-0460">Magnesium</keyword>
<keyword id="KW-0479">Metal-binding</keyword>
<keyword id="KW-0784">Thiamine biosynthesis</keyword>
<keyword id="KW-0808">Transferase</keyword>
<dbReference type="EC" id="2.5.1.3" evidence="1"/>
<dbReference type="EMBL" id="CP001130">
    <property type="protein sequence ID" value="ACG58248.1"/>
    <property type="molecule type" value="Genomic_DNA"/>
</dbReference>
<dbReference type="RefSeq" id="WP_012514604.1">
    <property type="nucleotide sequence ID" value="NC_011126.1"/>
</dbReference>
<dbReference type="SMR" id="B4U6B2"/>
<dbReference type="STRING" id="380749.HY04AAS1_1566"/>
<dbReference type="KEGG" id="hya:HY04AAS1_1566"/>
<dbReference type="eggNOG" id="COG0352">
    <property type="taxonomic scope" value="Bacteria"/>
</dbReference>
<dbReference type="HOGENOM" id="CLU_018272_3_2_0"/>
<dbReference type="OrthoDB" id="9812206at2"/>
<dbReference type="UniPathway" id="UPA00060">
    <property type="reaction ID" value="UER00141"/>
</dbReference>
<dbReference type="GO" id="GO:0005737">
    <property type="term" value="C:cytoplasm"/>
    <property type="evidence" value="ECO:0007669"/>
    <property type="project" value="TreeGrafter"/>
</dbReference>
<dbReference type="GO" id="GO:0000287">
    <property type="term" value="F:magnesium ion binding"/>
    <property type="evidence" value="ECO:0007669"/>
    <property type="project" value="UniProtKB-UniRule"/>
</dbReference>
<dbReference type="GO" id="GO:0004789">
    <property type="term" value="F:thiamine-phosphate diphosphorylase activity"/>
    <property type="evidence" value="ECO:0007669"/>
    <property type="project" value="UniProtKB-UniRule"/>
</dbReference>
<dbReference type="GO" id="GO:0009228">
    <property type="term" value="P:thiamine biosynthetic process"/>
    <property type="evidence" value="ECO:0007669"/>
    <property type="project" value="UniProtKB-KW"/>
</dbReference>
<dbReference type="GO" id="GO:0009229">
    <property type="term" value="P:thiamine diphosphate biosynthetic process"/>
    <property type="evidence" value="ECO:0007669"/>
    <property type="project" value="UniProtKB-UniRule"/>
</dbReference>
<dbReference type="CDD" id="cd00564">
    <property type="entry name" value="TMP_TenI"/>
    <property type="match status" value="1"/>
</dbReference>
<dbReference type="FunFam" id="3.20.20.70:FF:000096">
    <property type="entry name" value="Thiamine-phosphate synthase"/>
    <property type="match status" value="1"/>
</dbReference>
<dbReference type="Gene3D" id="3.20.20.70">
    <property type="entry name" value="Aldolase class I"/>
    <property type="match status" value="1"/>
</dbReference>
<dbReference type="HAMAP" id="MF_00097">
    <property type="entry name" value="TMP_synthase"/>
    <property type="match status" value="1"/>
</dbReference>
<dbReference type="InterPro" id="IPR013785">
    <property type="entry name" value="Aldolase_TIM"/>
</dbReference>
<dbReference type="InterPro" id="IPR036206">
    <property type="entry name" value="ThiamineP_synth_sf"/>
</dbReference>
<dbReference type="InterPro" id="IPR022998">
    <property type="entry name" value="ThiamineP_synth_TenI"/>
</dbReference>
<dbReference type="InterPro" id="IPR034291">
    <property type="entry name" value="TMP_synthase"/>
</dbReference>
<dbReference type="NCBIfam" id="TIGR00693">
    <property type="entry name" value="thiE"/>
    <property type="match status" value="1"/>
</dbReference>
<dbReference type="PANTHER" id="PTHR20857:SF23">
    <property type="entry name" value="THIAMINE BIOSYNTHETIC BIFUNCTIONAL ENZYME"/>
    <property type="match status" value="1"/>
</dbReference>
<dbReference type="PANTHER" id="PTHR20857">
    <property type="entry name" value="THIAMINE-PHOSPHATE PYROPHOSPHORYLASE"/>
    <property type="match status" value="1"/>
</dbReference>
<dbReference type="Pfam" id="PF02581">
    <property type="entry name" value="TMP-TENI"/>
    <property type="match status" value="1"/>
</dbReference>
<dbReference type="SUPFAM" id="SSF51391">
    <property type="entry name" value="Thiamin phosphate synthase"/>
    <property type="match status" value="1"/>
</dbReference>
<reference key="1">
    <citation type="journal article" date="2009" name="J. Bacteriol.">
        <title>Complete and draft genome sequences of six members of the Aquificales.</title>
        <authorList>
            <person name="Reysenbach A.-L."/>
            <person name="Hamamura N."/>
            <person name="Podar M."/>
            <person name="Griffiths E."/>
            <person name="Ferreira S."/>
            <person name="Hochstein R."/>
            <person name="Heidelberg J."/>
            <person name="Johnson J."/>
            <person name="Mead D."/>
            <person name="Pohorille A."/>
            <person name="Sarmiento M."/>
            <person name="Schweighofer K."/>
            <person name="Seshadri R."/>
            <person name="Voytek M.A."/>
        </authorList>
    </citation>
    <scope>NUCLEOTIDE SEQUENCE [LARGE SCALE GENOMIC DNA]</scope>
    <source>
        <strain>Y04AAS1</strain>
    </source>
</reference>
<name>THIE_HYDS0</name>
<sequence length="214" mass="24052">MFKDFNFSIYLVTDDAFFVDRDVVRTIEQAIEGGITAVQYRFKNKPSRKMYEELLVLRDITKQNKVALIVNDRVDLAIAVKADGVHVGQEDLPPDVCKKIIPEDMIVGYSVNNLEQLKDAMTMPIDYIGFGSVFHTKTKKDYKYVGLEALCKATNITSIPIIAIGGITHYNLKDVLKCKVKGVAVVSAILGFEDVKRAASDFKQMYKESLSMQI</sequence>
<evidence type="ECO:0000255" key="1">
    <source>
        <dbReference type="HAMAP-Rule" id="MF_00097"/>
    </source>
</evidence>
<protein>
    <recommendedName>
        <fullName evidence="1">Thiamine-phosphate synthase</fullName>
        <shortName evidence="1">TP synthase</shortName>
        <shortName evidence="1">TPS</shortName>
        <ecNumber evidence="1">2.5.1.3</ecNumber>
    </recommendedName>
    <alternativeName>
        <fullName evidence="1">Thiamine-phosphate pyrophosphorylase</fullName>
        <shortName evidence="1">TMP pyrophosphorylase</shortName>
        <shortName evidence="1">TMP-PPase</shortName>
    </alternativeName>
</protein>